<geneLocation type="chloroplast"/>
<feature type="chain" id="PRO_0000276096" description="Photosystem II reaction center protein J">
    <location>
        <begin position="1"/>
        <end position="40"/>
    </location>
</feature>
<feature type="transmembrane region" description="Helical" evidence="1">
    <location>
        <begin position="8"/>
        <end position="28"/>
    </location>
</feature>
<proteinExistence type="inferred from homology"/>
<sequence length="40" mass="4145">MADTTGRIPLWIIGTVTGIPVIGLIGIFFYGSYSGLGSSL</sequence>
<name>PSBJ_GOSBA</name>
<comment type="function">
    <text evidence="1">One of the components of the core complex of photosystem II (PSII). PSII is a light-driven water:plastoquinone oxidoreductase that uses light energy to abstract electrons from H(2)O, generating O(2) and a proton gradient subsequently used for ATP formation. It consists of a core antenna complex that captures photons, and an electron transfer chain that converts photonic excitation into a charge separation.</text>
</comment>
<comment type="subunit">
    <text evidence="1">PSII is composed of 1 copy each of membrane proteins PsbA, PsbB, PsbC, PsbD, PsbE, PsbF, PsbH, PsbI, PsbJ, PsbK, PsbL, PsbM, PsbT, PsbX, PsbY, PsbZ, Psb30/Ycf12, at least 3 peripheral proteins of the oxygen-evolving complex and a large number of cofactors. It forms dimeric complexes.</text>
</comment>
<comment type="subcellular location">
    <subcellularLocation>
        <location evidence="1">Plastid</location>
        <location evidence="1">Chloroplast thylakoid membrane</location>
        <topology evidence="1">Single-pass membrane protein</topology>
    </subcellularLocation>
</comment>
<comment type="similarity">
    <text evidence="1">Belongs to the PsbJ family.</text>
</comment>
<keyword id="KW-0150">Chloroplast</keyword>
<keyword id="KW-0472">Membrane</keyword>
<keyword id="KW-0602">Photosynthesis</keyword>
<keyword id="KW-0604">Photosystem II</keyword>
<keyword id="KW-0934">Plastid</keyword>
<keyword id="KW-0674">Reaction center</keyword>
<keyword id="KW-0793">Thylakoid</keyword>
<keyword id="KW-0812">Transmembrane</keyword>
<keyword id="KW-1133">Transmembrane helix</keyword>
<organism>
    <name type="scientific">Gossypium barbadense</name>
    <name type="common">Sea Island cotton</name>
    <name type="synonym">Hibiscus barbadensis</name>
    <dbReference type="NCBI Taxonomy" id="3634"/>
    <lineage>
        <taxon>Eukaryota</taxon>
        <taxon>Viridiplantae</taxon>
        <taxon>Streptophyta</taxon>
        <taxon>Embryophyta</taxon>
        <taxon>Tracheophyta</taxon>
        <taxon>Spermatophyta</taxon>
        <taxon>Magnoliopsida</taxon>
        <taxon>eudicotyledons</taxon>
        <taxon>Gunneridae</taxon>
        <taxon>Pentapetalae</taxon>
        <taxon>rosids</taxon>
        <taxon>malvids</taxon>
        <taxon>Malvales</taxon>
        <taxon>Malvaceae</taxon>
        <taxon>Malvoideae</taxon>
        <taxon>Gossypium</taxon>
    </lineage>
</organism>
<gene>
    <name evidence="1" type="primary">psbJ</name>
</gene>
<protein>
    <recommendedName>
        <fullName evidence="1">Photosystem II reaction center protein J</fullName>
        <shortName evidence="1">PSII-J</shortName>
    </recommendedName>
</protein>
<accession>A0ZZ49</accession>
<dbReference type="EMBL" id="AP009123">
    <property type="protein sequence ID" value="BAF41261.1"/>
    <property type="molecule type" value="Genomic_DNA"/>
</dbReference>
<dbReference type="RefSeq" id="YP_913201.1">
    <property type="nucleotide sequence ID" value="NC_008641.1"/>
</dbReference>
<dbReference type="SMR" id="A0ZZ49"/>
<dbReference type="GeneID" id="4575224"/>
<dbReference type="GO" id="GO:0009535">
    <property type="term" value="C:chloroplast thylakoid membrane"/>
    <property type="evidence" value="ECO:0007669"/>
    <property type="project" value="UniProtKB-SubCell"/>
</dbReference>
<dbReference type="GO" id="GO:0009539">
    <property type="term" value="C:photosystem II reaction center"/>
    <property type="evidence" value="ECO:0007669"/>
    <property type="project" value="InterPro"/>
</dbReference>
<dbReference type="GO" id="GO:0015979">
    <property type="term" value="P:photosynthesis"/>
    <property type="evidence" value="ECO:0007669"/>
    <property type="project" value="UniProtKB-UniRule"/>
</dbReference>
<dbReference type="Gene3D" id="6.10.250.2070">
    <property type="match status" value="1"/>
</dbReference>
<dbReference type="HAMAP" id="MF_01305">
    <property type="entry name" value="PSII_PsbJ"/>
    <property type="match status" value="1"/>
</dbReference>
<dbReference type="InterPro" id="IPR002682">
    <property type="entry name" value="PSII_PsbJ"/>
</dbReference>
<dbReference type="InterPro" id="IPR037267">
    <property type="entry name" value="PSII_PsbJ_sf"/>
</dbReference>
<dbReference type="NCBIfam" id="NF002722">
    <property type="entry name" value="PRK02565.1"/>
    <property type="match status" value="1"/>
</dbReference>
<dbReference type="PANTHER" id="PTHR34812">
    <property type="entry name" value="PHOTOSYSTEM II REACTION CENTER PROTEIN J"/>
    <property type="match status" value="1"/>
</dbReference>
<dbReference type="PANTHER" id="PTHR34812:SF3">
    <property type="entry name" value="PHOTOSYSTEM II REACTION CENTER PROTEIN J"/>
    <property type="match status" value="1"/>
</dbReference>
<dbReference type="Pfam" id="PF01788">
    <property type="entry name" value="PsbJ"/>
    <property type="match status" value="1"/>
</dbReference>
<dbReference type="SUPFAM" id="SSF161021">
    <property type="entry name" value="Photosystem II reaction center protein J, PsbJ"/>
    <property type="match status" value="1"/>
</dbReference>
<reference key="1">
    <citation type="journal article" date="2006" name="Genes Genet. Syst.">
        <title>Complete nucleotide sequence of the cotton (Gossypium barbadense L.) chloroplast genome with a comparative analysis of sequences among 9 dicot plants.</title>
        <authorList>
            <person name="Ibrahim R.I.H."/>
            <person name="Azuma J."/>
            <person name="Sakamoto M."/>
        </authorList>
    </citation>
    <scope>NUCLEOTIDE SEQUENCE [LARGE SCALE GENOMIC DNA]</scope>
</reference>
<evidence type="ECO:0000255" key="1">
    <source>
        <dbReference type="HAMAP-Rule" id="MF_01305"/>
    </source>
</evidence>